<organism>
    <name type="scientific">Chlorobium limicola (strain DSM 245 / NBRC 103803 / 6330)</name>
    <dbReference type="NCBI Taxonomy" id="290315"/>
    <lineage>
        <taxon>Bacteria</taxon>
        <taxon>Pseudomonadati</taxon>
        <taxon>Chlorobiota</taxon>
        <taxon>Chlorobiia</taxon>
        <taxon>Chlorobiales</taxon>
        <taxon>Chlorobiaceae</taxon>
        <taxon>Chlorobium/Pelodictyon group</taxon>
        <taxon>Chlorobium</taxon>
    </lineage>
</organism>
<evidence type="ECO:0000255" key="1">
    <source>
        <dbReference type="HAMAP-Rule" id="MF_01008"/>
    </source>
</evidence>
<evidence type="ECO:0000255" key="2">
    <source>
        <dbReference type="PROSITE-ProRule" id="PRU01076"/>
    </source>
</evidence>
<protein>
    <recommendedName>
        <fullName>Transcriptional regulator MraZ</fullName>
    </recommendedName>
</protein>
<reference key="1">
    <citation type="submission" date="2008-05" db="EMBL/GenBank/DDBJ databases">
        <title>Complete sequence of Chlorobium limicola DSM 245.</title>
        <authorList>
            <consortium name="US DOE Joint Genome Institute"/>
            <person name="Lucas S."/>
            <person name="Copeland A."/>
            <person name="Lapidus A."/>
            <person name="Glavina del Rio T."/>
            <person name="Dalin E."/>
            <person name="Tice H."/>
            <person name="Bruce D."/>
            <person name="Goodwin L."/>
            <person name="Pitluck S."/>
            <person name="Schmutz J."/>
            <person name="Larimer F."/>
            <person name="Land M."/>
            <person name="Hauser L."/>
            <person name="Kyrpides N."/>
            <person name="Ovchinnikova G."/>
            <person name="Zhao F."/>
            <person name="Li T."/>
            <person name="Liu Z."/>
            <person name="Overmann J."/>
            <person name="Bryant D.A."/>
            <person name="Richardson P."/>
        </authorList>
    </citation>
    <scope>NUCLEOTIDE SEQUENCE [LARGE SCALE GENOMIC DNA]</scope>
    <source>
        <strain>DSM 245 / NBRC 103803 / 6330</strain>
    </source>
</reference>
<feature type="chain" id="PRO_1000134778" description="Transcriptional regulator MraZ">
    <location>
        <begin position="1"/>
        <end position="161"/>
    </location>
</feature>
<feature type="domain" description="SpoVT-AbrB 1" evidence="2">
    <location>
        <begin position="7"/>
        <end position="69"/>
    </location>
</feature>
<feature type="domain" description="SpoVT-AbrB 2" evidence="2">
    <location>
        <begin position="98"/>
        <end position="141"/>
    </location>
</feature>
<name>MRAZ_CHLL2</name>
<sequence>MAGFIGKELHALDEKGRLMIPARFRRDFVRGNGVVAEDKRKGSDGSGDGIYLYLMKAPDGSLELYEPDVWQEMKKSLAGLSDFNPEERLLKTMIYESLDVVTVDRQGRIPLTKEFLDHAGIMKELVIIGADTKMVIWEPERLASVLHDNAGRFTALAGRYF</sequence>
<accession>B3EIL7</accession>
<dbReference type="EMBL" id="CP001097">
    <property type="protein sequence ID" value="ACD91529.1"/>
    <property type="molecule type" value="Genomic_DNA"/>
</dbReference>
<dbReference type="RefSeq" id="WP_012467393.1">
    <property type="nucleotide sequence ID" value="NC_010803.1"/>
</dbReference>
<dbReference type="SMR" id="B3EIL7"/>
<dbReference type="STRING" id="290315.Clim_2511"/>
<dbReference type="KEGG" id="cli:Clim_2511"/>
<dbReference type="eggNOG" id="COG2001">
    <property type="taxonomic scope" value="Bacteria"/>
</dbReference>
<dbReference type="HOGENOM" id="CLU_107907_0_5_10"/>
<dbReference type="OrthoDB" id="9807753at2"/>
<dbReference type="Proteomes" id="UP000008841">
    <property type="component" value="Chromosome"/>
</dbReference>
<dbReference type="GO" id="GO:0005737">
    <property type="term" value="C:cytoplasm"/>
    <property type="evidence" value="ECO:0007669"/>
    <property type="project" value="UniProtKB-UniRule"/>
</dbReference>
<dbReference type="GO" id="GO:0009295">
    <property type="term" value="C:nucleoid"/>
    <property type="evidence" value="ECO:0007669"/>
    <property type="project" value="UniProtKB-SubCell"/>
</dbReference>
<dbReference type="GO" id="GO:0003700">
    <property type="term" value="F:DNA-binding transcription factor activity"/>
    <property type="evidence" value="ECO:0007669"/>
    <property type="project" value="UniProtKB-UniRule"/>
</dbReference>
<dbReference type="GO" id="GO:0000976">
    <property type="term" value="F:transcription cis-regulatory region binding"/>
    <property type="evidence" value="ECO:0007669"/>
    <property type="project" value="TreeGrafter"/>
</dbReference>
<dbReference type="GO" id="GO:2000143">
    <property type="term" value="P:negative regulation of DNA-templated transcription initiation"/>
    <property type="evidence" value="ECO:0007669"/>
    <property type="project" value="TreeGrafter"/>
</dbReference>
<dbReference type="CDD" id="cd16321">
    <property type="entry name" value="MraZ_C"/>
    <property type="match status" value="1"/>
</dbReference>
<dbReference type="CDD" id="cd16320">
    <property type="entry name" value="MraZ_N"/>
    <property type="match status" value="1"/>
</dbReference>
<dbReference type="Gene3D" id="3.40.1550.20">
    <property type="entry name" value="Transcriptional regulator MraZ domain"/>
    <property type="match status" value="1"/>
</dbReference>
<dbReference type="HAMAP" id="MF_01008">
    <property type="entry name" value="MraZ"/>
    <property type="match status" value="1"/>
</dbReference>
<dbReference type="InterPro" id="IPR003444">
    <property type="entry name" value="MraZ"/>
</dbReference>
<dbReference type="InterPro" id="IPR035644">
    <property type="entry name" value="MraZ_C"/>
</dbReference>
<dbReference type="InterPro" id="IPR020603">
    <property type="entry name" value="MraZ_dom"/>
</dbReference>
<dbReference type="InterPro" id="IPR035642">
    <property type="entry name" value="MraZ_N"/>
</dbReference>
<dbReference type="InterPro" id="IPR038619">
    <property type="entry name" value="MraZ_sf"/>
</dbReference>
<dbReference type="InterPro" id="IPR007159">
    <property type="entry name" value="SpoVT-AbrB_dom"/>
</dbReference>
<dbReference type="InterPro" id="IPR037914">
    <property type="entry name" value="SpoVT-AbrB_sf"/>
</dbReference>
<dbReference type="NCBIfam" id="NF001476">
    <property type="entry name" value="PRK00326.2-2"/>
    <property type="match status" value="1"/>
</dbReference>
<dbReference type="PANTHER" id="PTHR34701">
    <property type="entry name" value="TRANSCRIPTIONAL REGULATOR MRAZ"/>
    <property type="match status" value="1"/>
</dbReference>
<dbReference type="PANTHER" id="PTHR34701:SF1">
    <property type="entry name" value="TRANSCRIPTIONAL REGULATOR MRAZ"/>
    <property type="match status" value="1"/>
</dbReference>
<dbReference type="Pfam" id="PF02381">
    <property type="entry name" value="MraZ"/>
    <property type="match status" value="2"/>
</dbReference>
<dbReference type="SUPFAM" id="SSF89447">
    <property type="entry name" value="AbrB/MazE/MraZ-like"/>
    <property type="match status" value="1"/>
</dbReference>
<dbReference type="PROSITE" id="PS51740">
    <property type="entry name" value="SPOVT_ABRB"/>
    <property type="match status" value="2"/>
</dbReference>
<proteinExistence type="inferred from homology"/>
<gene>
    <name evidence="1" type="primary">mraZ</name>
    <name type="ordered locus">Clim_2511</name>
</gene>
<keyword id="KW-0963">Cytoplasm</keyword>
<keyword id="KW-0238">DNA-binding</keyword>
<keyword id="KW-0677">Repeat</keyword>
<keyword id="KW-0804">Transcription</keyword>
<keyword id="KW-0805">Transcription regulation</keyword>
<comment type="subunit">
    <text evidence="1">Forms oligomers.</text>
</comment>
<comment type="subcellular location">
    <subcellularLocation>
        <location evidence="1">Cytoplasm</location>
        <location evidence="1">Nucleoid</location>
    </subcellularLocation>
</comment>
<comment type="similarity">
    <text evidence="1">Belongs to the MraZ family.</text>
</comment>